<dbReference type="EMBL" id="CP000471">
    <property type="protein sequence ID" value="ABK43708.1"/>
    <property type="molecule type" value="Genomic_DNA"/>
</dbReference>
<dbReference type="RefSeq" id="WP_011712863.1">
    <property type="nucleotide sequence ID" value="NC_008576.1"/>
</dbReference>
<dbReference type="STRING" id="156889.Mmc1_1197"/>
<dbReference type="KEGG" id="mgm:Mmc1_1197"/>
<dbReference type="HOGENOM" id="CLU_149349_0_0_5"/>
<dbReference type="OrthoDB" id="7689335at2"/>
<dbReference type="Proteomes" id="UP000002586">
    <property type="component" value="Chromosome"/>
</dbReference>
<dbReference type="GO" id="GO:0009399">
    <property type="term" value="P:nitrogen fixation"/>
    <property type="evidence" value="ECO:0007669"/>
    <property type="project" value="UniProtKB-UniRule"/>
</dbReference>
<dbReference type="HAMAP" id="MF_02117">
    <property type="entry name" value="CowN"/>
    <property type="match status" value="1"/>
</dbReference>
<dbReference type="InterPro" id="IPR024899">
    <property type="entry name" value="CowN"/>
</dbReference>
<dbReference type="NCBIfam" id="NF033689">
    <property type="entry name" value="N2Fix_CO_CowN"/>
    <property type="match status" value="1"/>
</dbReference>
<dbReference type="Pfam" id="PF20543">
    <property type="entry name" value="CowN"/>
    <property type="match status" value="1"/>
</dbReference>
<reference key="1">
    <citation type="journal article" date="2009" name="Appl. Environ. Microbiol.">
        <title>Complete genome sequence of the chemolithoautotrophic marine magnetotactic coccus strain MC-1.</title>
        <authorList>
            <person name="Schubbe S."/>
            <person name="Williams T.J."/>
            <person name="Xie G."/>
            <person name="Kiss H.E."/>
            <person name="Brettin T.S."/>
            <person name="Martinez D."/>
            <person name="Ross C.A."/>
            <person name="Schuler D."/>
            <person name="Cox B.L."/>
            <person name="Nealson K.H."/>
            <person name="Bazylinski D.A."/>
        </authorList>
    </citation>
    <scope>NUCLEOTIDE SEQUENCE [LARGE SCALE GENOMIC DNA]</scope>
    <source>
        <strain>ATCC BAA-1437 / JCM 17883 / MC-1</strain>
    </source>
</reference>
<keyword id="KW-0535">Nitrogen fixation</keyword>
<keyword id="KW-1185">Reference proteome</keyword>
<feature type="chain" id="PRO_0000407259" description="N(2)-fixation sustaining protein CowN">
    <location>
        <begin position="1"/>
        <end position="99"/>
    </location>
</feature>
<gene>
    <name evidence="1" type="primary">cowN</name>
    <name type="ordered locus">Mmc1_1197</name>
</gene>
<proteinExistence type="inferred from homology"/>
<sequence>MNTPAARPDRYQSFAHIPCDAMALKLLTHLEQLLQAEDTLEPFWQLFLQKAAIAKQPQPGQADALKLICSNSYYIFDLFAAQQDQAGEAMMDELEYQCC</sequence>
<evidence type="ECO:0000255" key="1">
    <source>
        <dbReference type="HAMAP-Rule" id="MF_02117"/>
    </source>
</evidence>
<accession>A0L6W5</accession>
<name>COWN_MAGMM</name>
<organism>
    <name type="scientific">Magnetococcus marinus (strain ATCC BAA-1437 / JCM 17883 / MC-1)</name>
    <dbReference type="NCBI Taxonomy" id="156889"/>
    <lineage>
        <taxon>Bacteria</taxon>
        <taxon>Pseudomonadati</taxon>
        <taxon>Pseudomonadota</taxon>
        <taxon>Alphaproteobacteria</taxon>
        <taxon>Magnetococcales</taxon>
        <taxon>Magnetococcaceae</taxon>
        <taxon>Magnetococcus</taxon>
    </lineage>
</organism>
<protein>
    <recommendedName>
        <fullName evidence="1">N(2)-fixation sustaining protein CowN</fullName>
    </recommendedName>
    <alternativeName>
        <fullName evidence="1">CO weal-nitrogenase</fullName>
    </alternativeName>
</protein>
<comment type="function">
    <text evidence="1">Is required to sustain N(2)-dependent growth in the presence of low levels of carbon monoxide (CO). Probably acts by protecting the N(2) fixation ability of the nitrogenase complex, which is inactivated in the presence of CO.</text>
</comment>
<comment type="similarity">
    <text evidence="1">Belongs to the CowN family.</text>
</comment>